<dbReference type="EMBL" id="U95945">
    <property type="protein sequence ID" value="AAB53863.1"/>
    <property type="molecule type" value="mRNA"/>
</dbReference>
<dbReference type="EMBL" id="BC024053">
    <property type="protein sequence ID" value="AAH24053.1"/>
    <property type="molecule type" value="mRNA"/>
</dbReference>
<dbReference type="CCDS" id="CCDS23339.1"/>
<dbReference type="RefSeq" id="NP_032288.1">
    <property type="nucleotide sequence ID" value="NM_008262.3"/>
</dbReference>
<dbReference type="PDB" id="1S7E">
    <property type="method" value="NMR"/>
    <property type="chains" value="A=291-437"/>
</dbReference>
<dbReference type="PDBsum" id="1S7E"/>
<dbReference type="BMRB" id="O08755"/>
<dbReference type="SMR" id="O08755"/>
<dbReference type="CORUM" id="O08755"/>
<dbReference type="FunCoup" id="O08755">
    <property type="interactions" value="1935"/>
</dbReference>
<dbReference type="STRING" id="10090.ENSMUSP00000058020"/>
<dbReference type="ChEMBL" id="CHEMBL2176818"/>
<dbReference type="PhosphoSitePlus" id="O08755"/>
<dbReference type="PaxDb" id="10090-ENSMUSP00000058020"/>
<dbReference type="PeptideAtlas" id="O08755"/>
<dbReference type="ProteomicsDB" id="273371"/>
<dbReference type="Antibodypedia" id="930">
    <property type="antibodies" value="232 antibodies from 30 providers"/>
</dbReference>
<dbReference type="DNASU" id="15379"/>
<dbReference type="Ensembl" id="ENSMUST00000056006.11">
    <property type="protein sequence ID" value="ENSMUSP00000058020.9"/>
    <property type="gene ID" value="ENSMUSG00000043013.11"/>
</dbReference>
<dbReference type="GeneID" id="15379"/>
<dbReference type="KEGG" id="mmu:15379"/>
<dbReference type="UCSC" id="uc009qrh.1">
    <property type="organism name" value="mouse"/>
</dbReference>
<dbReference type="AGR" id="MGI:1196423"/>
<dbReference type="CTD" id="3175"/>
<dbReference type="MGI" id="MGI:1196423">
    <property type="gene designation" value="Onecut1"/>
</dbReference>
<dbReference type="VEuPathDB" id="HostDB:ENSMUSG00000043013"/>
<dbReference type="eggNOG" id="KOG2252">
    <property type="taxonomic scope" value="Eukaryota"/>
</dbReference>
<dbReference type="GeneTree" id="ENSGT00950000183103"/>
<dbReference type="HOGENOM" id="CLU_018642_0_0_1"/>
<dbReference type="InParanoid" id="O08755"/>
<dbReference type="OMA" id="HRSNHLP"/>
<dbReference type="OrthoDB" id="10068888at2759"/>
<dbReference type="PhylomeDB" id="O08755"/>
<dbReference type="TreeFam" id="TF318206"/>
<dbReference type="BioGRID-ORCS" id="15379">
    <property type="hits" value="5 hits in 78 CRISPR screens"/>
</dbReference>
<dbReference type="EvolutionaryTrace" id="O08755"/>
<dbReference type="PRO" id="PR:O08755"/>
<dbReference type="Proteomes" id="UP000000589">
    <property type="component" value="Chromosome 9"/>
</dbReference>
<dbReference type="RNAct" id="O08755">
    <property type="molecule type" value="protein"/>
</dbReference>
<dbReference type="Bgee" id="ENSMUSG00000043013">
    <property type="expression patterns" value="Expressed in foregut-midgut junction and 77 other cell types or tissues"/>
</dbReference>
<dbReference type="GO" id="GO:0005654">
    <property type="term" value="C:nucleoplasm"/>
    <property type="evidence" value="ECO:0000304"/>
    <property type="project" value="Reactome"/>
</dbReference>
<dbReference type="GO" id="GO:0005634">
    <property type="term" value="C:nucleus"/>
    <property type="evidence" value="ECO:0000314"/>
    <property type="project" value="MGI"/>
</dbReference>
<dbReference type="GO" id="GO:0003682">
    <property type="term" value="F:chromatin binding"/>
    <property type="evidence" value="ECO:0000314"/>
    <property type="project" value="MGI"/>
</dbReference>
<dbReference type="GO" id="GO:0003677">
    <property type="term" value="F:DNA binding"/>
    <property type="evidence" value="ECO:0000314"/>
    <property type="project" value="MGI"/>
</dbReference>
<dbReference type="GO" id="GO:0003700">
    <property type="term" value="F:DNA-binding transcription factor activity"/>
    <property type="evidence" value="ECO:0000314"/>
    <property type="project" value="MGI"/>
</dbReference>
<dbReference type="GO" id="GO:0000978">
    <property type="term" value="F:RNA polymerase II cis-regulatory region sequence-specific DNA binding"/>
    <property type="evidence" value="ECO:0000314"/>
    <property type="project" value="MGI"/>
</dbReference>
<dbReference type="GO" id="GO:0009653">
    <property type="term" value="P:anatomical structure morphogenesis"/>
    <property type="evidence" value="ECO:0000315"/>
    <property type="project" value="MGI"/>
</dbReference>
<dbReference type="GO" id="GO:0030183">
    <property type="term" value="P:B cell differentiation"/>
    <property type="evidence" value="ECO:0000315"/>
    <property type="project" value="MGI"/>
</dbReference>
<dbReference type="GO" id="GO:0045165">
    <property type="term" value="P:cell fate commitment"/>
    <property type="evidence" value="ECO:0000316"/>
    <property type="project" value="MGI"/>
</dbReference>
<dbReference type="GO" id="GO:0016477">
    <property type="term" value="P:cell migration"/>
    <property type="evidence" value="ECO:0000316"/>
    <property type="project" value="MGI"/>
</dbReference>
<dbReference type="GO" id="GO:0060271">
    <property type="term" value="P:cilium assembly"/>
    <property type="evidence" value="ECO:0000315"/>
    <property type="project" value="MGI"/>
</dbReference>
<dbReference type="GO" id="GO:0031018">
    <property type="term" value="P:endocrine pancreas development"/>
    <property type="evidence" value="ECO:0000316"/>
    <property type="project" value="MGI"/>
</dbReference>
<dbReference type="GO" id="GO:0007492">
    <property type="term" value="P:endoderm development"/>
    <property type="evidence" value="ECO:0000315"/>
    <property type="project" value="MGI"/>
</dbReference>
<dbReference type="GO" id="GO:0035883">
    <property type="term" value="P:enteroendocrine cell differentiation"/>
    <property type="evidence" value="ECO:0000315"/>
    <property type="project" value="MGI"/>
</dbReference>
<dbReference type="GO" id="GO:0002064">
    <property type="term" value="P:epithelial cell development"/>
    <property type="evidence" value="ECO:0000315"/>
    <property type="project" value="MGI"/>
</dbReference>
<dbReference type="GO" id="GO:0006006">
    <property type="term" value="P:glucose metabolic process"/>
    <property type="evidence" value="ECO:0000315"/>
    <property type="project" value="MGI"/>
</dbReference>
<dbReference type="GO" id="GO:0001889">
    <property type="term" value="P:liver development"/>
    <property type="evidence" value="ECO:0000316"/>
    <property type="project" value="MGI"/>
</dbReference>
<dbReference type="GO" id="GO:0030512">
    <property type="term" value="P:negative regulation of transforming growth factor beta receptor signaling pathway"/>
    <property type="evidence" value="ECO:0000316"/>
    <property type="project" value="MGI"/>
</dbReference>
<dbReference type="GO" id="GO:0007219">
    <property type="term" value="P:Notch signaling pathway"/>
    <property type="evidence" value="ECO:0000314"/>
    <property type="project" value="MGI"/>
</dbReference>
<dbReference type="GO" id="GO:0031016">
    <property type="term" value="P:pancreas development"/>
    <property type="evidence" value="ECO:0000315"/>
    <property type="project" value="MGI"/>
</dbReference>
<dbReference type="GO" id="GO:0003310">
    <property type="term" value="P:pancreatic A cell differentiation"/>
    <property type="evidence" value="ECO:0000315"/>
    <property type="project" value="MGI"/>
</dbReference>
<dbReference type="GO" id="GO:0003311">
    <property type="term" value="P:pancreatic D cell differentiation"/>
    <property type="evidence" value="ECO:0000315"/>
    <property type="project" value="MGI"/>
</dbReference>
<dbReference type="GO" id="GO:0030335">
    <property type="term" value="P:positive regulation of cell migration"/>
    <property type="evidence" value="ECO:0000316"/>
    <property type="project" value="MGI"/>
</dbReference>
<dbReference type="GO" id="GO:0045944">
    <property type="term" value="P:positive regulation of transcription by RNA polymerase II"/>
    <property type="evidence" value="ECO:0000314"/>
    <property type="project" value="MGI"/>
</dbReference>
<dbReference type="GO" id="GO:0001952">
    <property type="term" value="P:regulation of cell-matrix adhesion"/>
    <property type="evidence" value="ECO:0000316"/>
    <property type="project" value="MGI"/>
</dbReference>
<dbReference type="GO" id="GO:0006357">
    <property type="term" value="P:regulation of transcription by RNA polymerase II"/>
    <property type="evidence" value="ECO:0000315"/>
    <property type="project" value="MGI"/>
</dbReference>
<dbReference type="GO" id="GO:0048536">
    <property type="term" value="P:spleen development"/>
    <property type="evidence" value="ECO:0000315"/>
    <property type="project" value="MGI"/>
</dbReference>
<dbReference type="GO" id="GO:0007179">
    <property type="term" value="P:transforming growth factor beta receptor signaling pathway"/>
    <property type="evidence" value="ECO:0000316"/>
    <property type="project" value="MGI"/>
</dbReference>
<dbReference type="GO" id="GO:0003309">
    <property type="term" value="P:type B pancreatic cell differentiation"/>
    <property type="evidence" value="ECO:0000315"/>
    <property type="project" value="MGI"/>
</dbReference>
<dbReference type="CDD" id="cd00086">
    <property type="entry name" value="homeodomain"/>
    <property type="match status" value="1"/>
</dbReference>
<dbReference type="FunFam" id="1.10.10.60:FF:000054">
    <property type="entry name" value="One cut domain family member"/>
    <property type="match status" value="1"/>
</dbReference>
<dbReference type="FunFam" id="1.10.260.40:FF:000005">
    <property type="entry name" value="One cut domain family member"/>
    <property type="match status" value="1"/>
</dbReference>
<dbReference type="Gene3D" id="1.10.10.60">
    <property type="entry name" value="Homeodomain-like"/>
    <property type="match status" value="1"/>
</dbReference>
<dbReference type="Gene3D" id="1.10.260.40">
    <property type="entry name" value="lambda repressor-like DNA-binding domains"/>
    <property type="match status" value="1"/>
</dbReference>
<dbReference type="InterPro" id="IPR003350">
    <property type="entry name" value="CUT_dom"/>
</dbReference>
<dbReference type="InterPro" id="IPR051649">
    <property type="entry name" value="CUT_Homeobox"/>
</dbReference>
<dbReference type="InterPro" id="IPR001356">
    <property type="entry name" value="HD"/>
</dbReference>
<dbReference type="InterPro" id="IPR009057">
    <property type="entry name" value="Homeodomain-like_sf"/>
</dbReference>
<dbReference type="InterPro" id="IPR010982">
    <property type="entry name" value="Lambda_DNA-bd_dom_sf"/>
</dbReference>
<dbReference type="PANTHER" id="PTHR14057:SF9">
    <property type="entry name" value="HEPATOCYTE NUCLEAR FACTOR 6"/>
    <property type="match status" value="1"/>
</dbReference>
<dbReference type="PANTHER" id="PTHR14057">
    <property type="entry name" value="TRANSCRIPTION FACTOR ONECUT"/>
    <property type="match status" value="1"/>
</dbReference>
<dbReference type="Pfam" id="PF02376">
    <property type="entry name" value="CUT"/>
    <property type="match status" value="1"/>
</dbReference>
<dbReference type="Pfam" id="PF00046">
    <property type="entry name" value="Homeodomain"/>
    <property type="match status" value="1"/>
</dbReference>
<dbReference type="SMART" id="SM01109">
    <property type="entry name" value="CUT"/>
    <property type="match status" value="1"/>
</dbReference>
<dbReference type="SMART" id="SM00389">
    <property type="entry name" value="HOX"/>
    <property type="match status" value="1"/>
</dbReference>
<dbReference type="SUPFAM" id="SSF46689">
    <property type="entry name" value="Homeodomain-like"/>
    <property type="match status" value="1"/>
</dbReference>
<dbReference type="SUPFAM" id="SSF47413">
    <property type="entry name" value="lambda repressor-like DNA-binding domains"/>
    <property type="match status" value="1"/>
</dbReference>
<dbReference type="PROSITE" id="PS51042">
    <property type="entry name" value="CUT"/>
    <property type="match status" value="1"/>
</dbReference>
<dbReference type="PROSITE" id="PS50071">
    <property type="entry name" value="HOMEOBOX_2"/>
    <property type="match status" value="1"/>
</dbReference>
<reference key="1">
    <citation type="journal article" date="1997" name="Dev. Biol.">
        <title>The cut-homeodomain transcriptional activator HNF-6 is coexpressed with its target gene HNF-3 beta in the developing murine liver and pancreas.</title>
        <authorList>
            <person name="Rausa F."/>
            <person name="Samadani U."/>
            <person name="Ye H."/>
            <person name="Lim L."/>
            <person name="Fletcher C.F."/>
            <person name="Jenkins N.A."/>
            <person name="Copeland N.G."/>
            <person name="Costa R.H."/>
        </authorList>
    </citation>
    <scope>NUCLEOTIDE SEQUENCE [MRNA]</scope>
    <source>
        <tissue>Liver</tissue>
    </source>
</reference>
<reference key="2">
    <citation type="journal article" date="2004" name="Genome Res.">
        <title>The status, quality, and expansion of the NIH full-length cDNA project: the Mammalian Gene Collection (MGC).</title>
        <authorList>
            <consortium name="The MGC Project Team"/>
        </authorList>
    </citation>
    <scope>NUCLEOTIDE SEQUENCE [LARGE SCALE MRNA]</scope>
    <source>
        <strain>FVB/N</strain>
        <tissue>Liver</tissue>
    </source>
</reference>
<reference key="3">
    <citation type="journal article" date="2004" name="J. Biol. Chem.">
        <title>The transcription factor hepatocyte nuclear factor-6/Onecut-1 controls the expression of its paralog Onecut-3 in developing mouse endoderm.</title>
        <authorList>
            <person name="Pierreux C.E."/>
            <person name="Vanhorenbeeck V."/>
            <person name="Jacquemin P."/>
            <person name="Lemaigre F.P."/>
            <person name="Rousseau G.G."/>
        </authorList>
    </citation>
    <scope>FUNCTION</scope>
</reference>
<reference key="4">
    <citation type="journal article" date="2004" name="J. Biol. Chem.">
        <title>Structure of the hepatocyte nuclear factor 6alpha and its interaction with DNA.</title>
        <authorList>
            <person name="Sheng W."/>
            <person name="Yan H."/>
            <person name="Rausa F.M. III"/>
            <person name="Costa R.H."/>
            <person name="Liao X."/>
        </authorList>
    </citation>
    <scope>STRUCTURE BY NMR OF 291-437</scope>
    <scope>SUBUNIT</scope>
</reference>
<accession>O08755</accession>
<protein>
    <recommendedName>
        <fullName>Hepatocyte nuclear factor 6</fullName>
        <shortName>HNF-6</shortName>
    </recommendedName>
    <alternativeName>
        <fullName>One cut domain family member 1</fullName>
    </alternativeName>
    <alternativeName>
        <fullName>One cut homeobox 1</fullName>
    </alternativeName>
</protein>
<organism>
    <name type="scientific">Mus musculus</name>
    <name type="common">Mouse</name>
    <dbReference type="NCBI Taxonomy" id="10090"/>
    <lineage>
        <taxon>Eukaryota</taxon>
        <taxon>Metazoa</taxon>
        <taxon>Chordata</taxon>
        <taxon>Craniata</taxon>
        <taxon>Vertebrata</taxon>
        <taxon>Euteleostomi</taxon>
        <taxon>Mammalia</taxon>
        <taxon>Eutheria</taxon>
        <taxon>Euarchontoglires</taxon>
        <taxon>Glires</taxon>
        <taxon>Rodentia</taxon>
        <taxon>Myomorpha</taxon>
        <taxon>Muroidea</taxon>
        <taxon>Muridae</taxon>
        <taxon>Murinae</taxon>
        <taxon>Mus</taxon>
        <taxon>Mus</taxon>
    </lineage>
</organism>
<sequence>MNAQLTMEAIGELHGVSHEPVPAPADLLGGSPHARSSVGHRGSHLPPAHPRSMGMASLLDGGSGGSDYHHHHRAPEHSLAGPLHPTMTMACETPPGMSMPTTYTTLTPLQPLPPISTVSDKFPHHHHHHHHHHHPHHHQRLAGNVSGSFTLMRDERGLASMNNLYTPYHKDVAGMGQSLSPLSGSGLGSIHNSQQGLPHYAHPGAAMPTDKMLTPNGFEAHHPAMLGRHGEQHLTPTSAGMVPINGLPPHHPHAHLNAQGHGQLLGTAREPNPSVTGAQVSNGSNSGQMEEINTKEVAQRITTELKRYSIPQAIFAQRVLCRSQGTLSDLLRNPKPWSKLKSGRETFRRMWKWLQEPEFQRMSALRLAACKRKEQEHGKDRGNTPKKPRLVFTDVQRRTLHAIFKENKRPSKELQITISQQLGLELSTVSNFFMNARRRSLDKWQDEGGSNSGSSSSSSSTCTKA</sequence>
<name>HNF6_MOUSE</name>
<comment type="function">
    <text evidence="5">Transcriptional activator. Binds the consensus sequence 5'-DHWATTGAYTWWD-3' on a variety of gene promoters such as those of HNF3B and TTR. Important for liver genes transcription. Stimulates the expression of Onecut3 in the developing endoderm.</text>
</comment>
<comment type="subunit">
    <text evidence="4">Binds DNA as a monomer.</text>
</comment>
<comment type="subcellular location">
    <subcellularLocation>
        <location>Nucleus</location>
    </subcellularLocation>
</comment>
<comment type="similarity">
    <text evidence="6">Belongs to the CUT homeobox family.</text>
</comment>
<keyword id="KW-0002">3D-structure</keyword>
<keyword id="KW-0010">Activator</keyword>
<keyword id="KW-0238">DNA-binding</keyword>
<keyword id="KW-0371">Homeobox</keyword>
<keyword id="KW-0539">Nucleus</keyword>
<keyword id="KW-1185">Reference proteome</keyword>
<keyword id="KW-0804">Transcription</keyword>
<keyword id="KW-0805">Transcription regulation</keyword>
<feature type="chain" id="PRO_0000202403" description="Hepatocyte nuclear factor 6">
    <location>
        <begin position="1"/>
        <end position="465"/>
    </location>
</feature>
<feature type="DNA-binding region" description="CUT" evidence="2">
    <location>
        <begin position="283"/>
        <end position="369"/>
    </location>
</feature>
<feature type="DNA-binding region" description="Homeobox" evidence="1">
    <location>
        <begin position="385"/>
        <end position="444"/>
    </location>
</feature>
<feature type="region of interest" description="Disordered" evidence="3">
    <location>
        <begin position="15"/>
        <end position="84"/>
    </location>
</feature>
<feature type="region of interest" description="Disordered" evidence="3">
    <location>
        <begin position="119"/>
        <end position="141"/>
    </location>
</feature>
<feature type="region of interest" description="Disordered" evidence="3">
    <location>
        <begin position="443"/>
        <end position="465"/>
    </location>
</feature>
<feature type="compositionally biased region" description="Basic residues" evidence="3">
    <location>
        <begin position="123"/>
        <end position="140"/>
    </location>
</feature>
<feature type="compositionally biased region" description="Low complexity" evidence="3">
    <location>
        <begin position="448"/>
        <end position="465"/>
    </location>
</feature>
<feature type="helix" evidence="7">
    <location>
        <begin position="295"/>
        <end position="305"/>
    </location>
</feature>
<feature type="helix" evidence="7">
    <location>
        <begin position="312"/>
        <end position="318"/>
    </location>
</feature>
<feature type="strand" evidence="7">
    <location>
        <begin position="320"/>
        <end position="322"/>
    </location>
</feature>
<feature type="helix" evidence="7">
    <location>
        <begin position="326"/>
        <end position="330"/>
    </location>
</feature>
<feature type="helix" evidence="7">
    <location>
        <begin position="344"/>
        <end position="355"/>
    </location>
</feature>
<feature type="strand" evidence="7">
    <location>
        <begin position="378"/>
        <end position="380"/>
    </location>
</feature>
<feature type="helix" evidence="7">
    <location>
        <begin position="394"/>
        <end position="403"/>
    </location>
</feature>
<feature type="helix" evidence="7">
    <location>
        <begin position="412"/>
        <end position="419"/>
    </location>
</feature>
<feature type="strand" evidence="7">
    <location>
        <begin position="424"/>
        <end position="426"/>
    </location>
</feature>
<feature type="helix" evidence="7">
    <location>
        <begin position="427"/>
        <end position="435"/>
    </location>
</feature>
<gene>
    <name type="primary">Onecut1</name>
    <name type="synonym">Hnf6</name>
    <name type="synonym">Hnf6a</name>
</gene>
<evidence type="ECO:0000255" key="1">
    <source>
        <dbReference type="PROSITE-ProRule" id="PRU00108"/>
    </source>
</evidence>
<evidence type="ECO:0000255" key="2">
    <source>
        <dbReference type="PROSITE-ProRule" id="PRU00374"/>
    </source>
</evidence>
<evidence type="ECO:0000256" key="3">
    <source>
        <dbReference type="SAM" id="MobiDB-lite"/>
    </source>
</evidence>
<evidence type="ECO:0000269" key="4">
    <source>
    </source>
</evidence>
<evidence type="ECO:0000269" key="5">
    <source>
    </source>
</evidence>
<evidence type="ECO:0000305" key="6"/>
<evidence type="ECO:0007829" key="7">
    <source>
        <dbReference type="PDB" id="1S7E"/>
    </source>
</evidence>
<proteinExistence type="evidence at protein level"/>